<sequence>MKNIAIIGASGYTGAQLTALIHAEAELTIQGLYVSENSLDKGKPLADLYPSYSHIALTLSPLSEDAKAKIVAEADAVVLATEHSVSLHLAAWFYSQGLAVFDLSGAYRFSDVAQYPKWYGFEHEYPEVLAKAVYGLAEWNAKEIAATKMIAVPGCYPTASLTALKPLASLLTSAYPVINAVSGVTGAGRKAQLHTSFCEVSLTPYGVLGHRHQPEIATQLGQEVIFTPHLGNFKRGILATITVQLKPGTTTADVAAAYSVYDQAPLVTVKHNQFPKVDDVVLTPNCHLGWKFDENSGYLVVASAIDNLMKGAASQALQCIKIHFNL</sequence>
<dbReference type="EC" id="1.2.1.38" evidence="1"/>
<dbReference type="EMBL" id="CP000563">
    <property type="protein sequence ID" value="ABN63589.1"/>
    <property type="molecule type" value="Genomic_DNA"/>
</dbReference>
<dbReference type="RefSeq" id="WP_006084517.1">
    <property type="nucleotide sequence ID" value="NC_009052.1"/>
</dbReference>
<dbReference type="SMR" id="A3DA26"/>
<dbReference type="STRING" id="325240.Sbal_4124"/>
<dbReference type="KEGG" id="sbl:Sbal_4124"/>
<dbReference type="HOGENOM" id="CLU_006384_0_1_6"/>
<dbReference type="OrthoDB" id="9801289at2"/>
<dbReference type="UniPathway" id="UPA00068">
    <property type="reaction ID" value="UER00108"/>
</dbReference>
<dbReference type="Proteomes" id="UP000001557">
    <property type="component" value="Chromosome"/>
</dbReference>
<dbReference type="GO" id="GO:0005737">
    <property type="term" value="C:cytoplasm"/>
    <property type="evidence" value="ECO:0007669"/>
    <property type="project" value="UniProtKB-SubCell"/>
</dbReference>
<dbReference type="GO" id="GO:0003942">
    <property type="term" value="F:N-acetyl-gamma-glutamyl-phosphate reductase activity"/>
    <property type="evidence" value="ECO:0007669"/>
    <property type="project" value="UniProtKB-UniRule"/>
</dbReference>
<dbReference type="GO" id="GO:0051287">
    <property type="term" value="F:NAD binding"/>
    <property type="evidence" value="ECO:0007669"/>
    <property type="project" value="InterPro"/>
</dbReference>
<dbReference type="GO" id="GO:0070401">
    <property type="term" value="F:NADP+ binding"/>
    <property type="evidence" value="ECO:0007669"/>
    <property type="project" value="InterPro"/>
</dbReference>
<dbReference type="GO" id="GO:0006526">
    <property type="term" value="P:L-arginine biosynthetic process"/>
    <property type="evidence" value="ECO:0007669"/>
    <property type="project" value="UniProtKB-UniRule"/>
</dbReference>
<dbReference type="CDD" id="cd23934">
    <property type="entry name" value="AGPR_1_C"/>
    <property type="match status" value="1"/>
</dbReference>
<dbReference type="CDD" id="cd17895">
    <property type="entry name" value="AGPR_1_N"/>
    <property type="match status" value="1"/>
</dbReference>
<dbReference type="FunFam" id="3.30.360.10:FF:000014">
    <property type="entry name" value="N-acetyl-gamma-glutamyl-phosphate reductase"/>
    <property type="match status" value="1"/>
</dbReference>
<dbReference type="Gene3D" id="3.30.360.10">
    <property type="entry name" value="Dihydrodipicolinate Reductase, domain 2"/>
    <property type="match status" value="1"/>
</dbReference>
<dbReference type="Gene3D" id="3.40.50.720">
    <property type="entry name" value="NAD(P)-binding Rossmann-like Domain"/>
    <property type="match status" value="1"/>
</dbReference>
<dbReference type="HAMAP" id="MF_00150">
    <property type="entry name" value="ArgC_type1"/>
    <property type="match status" value="1"/>
</dbReference>
<dbReference type="InterPro" id="IPR023013">
    <property type="entry name" value="AGPR_AS"/>
</dbReference>
<dbReference type="InterPro" id="IPR000706">
    <property type="entry name" value="AGPR_type-1"/>
</dbReference>
<dbReference type="InterPro" id="IPR036291">
    <property type="entry name" value="NAD(P)-bd_dom_sf"/>
</dbReference>
<dbReference type="InterPro" id="IPR050085">
    <property type="entry name" value="NAGSA_dehydrogenase"/>
</dbReference>
<dbReference type="InterPro" id="IPR000534">
    <property type="entry name" value="Semialdehyde_DH_NAD-bd"/>
</dbReference>
<dbReference type="NCBIfam" id="TIGR01850">
    <property type="entry name" value="argC"/>
    <property type="match status" value="1"/>
</dbReference>
<dbReference type="PANTHER" id="PTHR32338:SF10">
    <property type="entry name" value="N-ACETYL-GAMMA-GLUTAMYL-PHOSPHATE REDUCTASE, CHLOROPLASTIC-RELATED"/>
    <property type="match status" value="1"/>
</dbReference>
<dbReference type="PANTHER" id="PTHR32338">
    <property type="entry name" value="N-ACETYL-GAMMA-GLUTAMYL-PHOSPHATE REDUCTASE, CHLOROPLASTIC-RELATED-RELATED"/>
    <property type="match status" value="1"/>
</dbReference>
<dbReference type="Pfam" id="PF01118">
    <property type="entry name" value="Semialdhyde_dh"/>
    <property type="match status" value="1"/>
</dbReference>
<dbReference type="Pfam" id="PF22698">
    <property type="entry name" value="Semialdhyde_dhC_1"/>
    <property type="match status" value="1"/>
</dbReference>
<dbReference type="SMART" id="SM00859">
    <property type="entry name" value="Semialdhyde_dh"/>
    <property type="match status" value="1"/>
</dbReference>
<dbReference type="SUPFAM" id="SSF55347">
    <property type="entry name" value="Glyceraldehyde-3-phosphate dehydrogenase-like, C-terminal domain"/>
    <property type="match status" value="1"/>
</dbReference>
<dbReference type="SUPFAM" id="SSF51735">
    <property type="entry name" value="NAD(P)-binding Rossmann-fold domains"/>
    <property type="match status" value="1"/>
</dbReference>
<dbReference type="PROSITE" id="PS01224">
    <property type="entry name" value="ARGC"/>
    <property type="match status" value="1"/>
</dbReference>
<gene>
    <name evidence="1" type="primary">argC</name>
    <name type="ordered locus">Sbal_4124</name>
</gene>
<name>ARGC_SHEB5</name>
<organism>
    <name type="scientific">Shewanella baltica (strain OS155 / ATCC BAA-1091)</name>
    <dbReference type="NCBI Taxonomy" id="325240"/>
    <lineage>
        <taxon>Bacteria</taxon>
        <taxon>Pseudomonadati</taxon>
        <taxon>Pseudomonadota</taxon>
        <taxon>Gammaproteobacteria</taxon>
        <taxon>Alteromonadales</taxon>
        <taxon>Shewanellaceae</taxon>
        <taxon>Shewanella</taxon>
    </lineage>
</organism>
<keyword id="KW-0028">Amino-acid biosynthesis</keyword>
<keyword id="KW-0055">Arginine biosynthesis</keyword>
<keyword id="KW-0963">Cytoplasm</keyword>
<keyword id="KW-0521">NADP</keyword>
<keyword id="KW-0560">Oxidoreductase</keyword>
<keyword id="KW-1185">Reference proteome</keyword>
<accession>A3DA26</accession>
<evidence type="ECO:0000255" key="1">
    <source>
        <dbReference type="HAMAP-Rule" id="MF_00150"/>
    </source>
</evidence>
<protein>
    <recommendedName>
        <fullName evidence="1">N-acetyl-gamma-glutamyl-phosphate reductase</fullName>
        <shortName evidence="1">AGPR</shortName>
        <ecNumber evidence="1">1.2.1.38</ecNumber>
    </recommendedName>
    <alternativeName>
        <fullName evidence="1">N-acetyl-glutamate semialdehyde dehydrogenase</fullName>
        <shortName evidence="1">NAGSA dehydrogenase</shortName>
    </alternativeName>
</protein>
<comment type="function">
    <text evidence="1">Catalyzes the NADPH-dependent reduction of N-acetyl-5-glutamyl phosphate to yield N-acetyl-L-glutamate 5-semialdehyde.</text>
</comment>
<comment type="catalytic activity">
    <reaction evidence="1">
        <text>N-acetyl-L-glutamate 5-semialdehyde + phosphate + NADP(+) = N-acetyl-L-glutamyl 5-phosphate + NADPH + H(+)</text>
        <dbReference type="Rhea" id="RHEA:21588"/>
        <dbReference type="ChEBI" id="CHEBI:15378"/>
        <dbReference type="ChEBI" id="CHEBI:29123"/>
        <dbReference type="ChEBI" id="CHEBI:43474"/>
        <dbReference type="ChEBI" id="CHEBI:57783"/>
        <dbReference type="ChEBI" id="CHEBI:57936"/>
        <dbReference type="ChEBI" id="CHEBI:58349"/>
        <dbReference type="EC" id="1.2.1.38"/>
    </reaction>
</comment>
<comment type="pathway">
    <text evidence="1">Amino-acid biosynthesis; L-arginine biosynthesis; N(2)-acetyl-L-ornithine from L-glutamate: step 3/4.</text>
</comment>
<comment type="subcellular location">
    <subcellularLocation>
        <location evidence="1">Cytoplasm</location>
    </subcellularLocation>
</comment>
<comment type="similarity">
    <text evidence="1">Belongs to the NAGSA dehydrogenase family. Type 1 subfamily.</text>
</comment>
<proteinExistence type="inferred from homology"/>
<feature type="chain" id="PRO_1000011056" description="N-acetyl-gamma-glutamyl-phosphate reductase">
    <location>
        <begin position="1"/>
        <end position="326"/>
    </location>
</feature>
<feature type="active site" evidence="1">
    <location>
        <position position="155"/>
    </location>
</feature>
<reference key="1">
    <citation type="submission" date="2007-02" db="EMBL/GenBank/DDBJ databases">
        <title>Complete sequence of chromosome of Shewanella baltica OS155.</title>
        <authorList>
            <consortium name="US DOE Joint Genome Institute"/>
            <person name="Copeland A."/>
            <person name="Lucas S."/>
            <person name="Lapidus A."/>
            <person name="Barry K."/>
            <person name="Detter J.C."/>
            <person name="Glavina del Rio T."/>
            <person name="Hammon N."/>
            <person name="Israni S."/>
            <person name="Dalin E."/>
            <person name="Tice H."/>
            <person name="Pitluck S."/>
            <person name="Sims D.R."/>
            <person name="Brettin T."/>
            <person name="Bruce D."/>
            <person name="Han C."/>
            <person name="Tapia R."/>
            <person name="Brainard J."/>
            <person name="Schmutz J."/>
            <person name="Larimer F."/>
            <person name="Land M."/>
            <person name="Hauser L."/>
            <person name="Kyrpides N."/>
            <person name="Mikhailova N."/>
            <person name="Brettar I."/>
            <person name="Klappenbach J."/>
            <person name="Konstantinidis K."/>
            <person name="Rodrigues J."/>
            <person name="Tiedje J."/>
            <person name="Richardson P."/>
        </authorList>
    </citation>
    <scope>NUCLEOTIDE SEQUENCE [LARGE SCALE GENOMIC DNA]</scope>
    <source>
        <strain>OS155 / ATCC BAA-1091</strain>
    </source>
</reference>